<evidence type="ECO:0000250" key="1">
    <source>
        <dbReference type="UniProtKB" id="P29882"/>
    </source>
</evidence>
<evidence type="ECO:0000255" key="2">
    <source>
        <dbReference type="HAMAP-Rule" id="MF_04038"/>
    </source>
</evidence>
<sequence length="278" mass="31272">MASGKHHQPGGTRSLTMQKVSLRVTPRLVLEVNRHNAICVATNVPEFYNARGDLNIRDLRAHVKARMISSQFCGYVLVSLLDSEDQVDHLNIFPHVFSERMILYKPNNVNLMEMCALLSMIENAKSPSIGLCREVLGRLTLLHSKCNNLDSLFLYNGARTLLSTLVKYHDLEEGAATPGPWNEGLSLFKLHKELKRAPSEARDLMQSLFLTSGKMGCLARSPKDYCADLNKEEDANSGFTFNLFYQDSLLTKHFQCQTVLQTLRRKCLGSDTVSKIIP</sequence>
<reference key="1">
    <citation type="journal article" date="2006" name="Virology">
        <title>The genome of Epstein-Barr virus type 2 strain AG876.</title>
        <authorList>
            <person name="Dolan A."/>
            <person name="Addison C."/>
            <person name="Gatherer D."/>
            <person name="Davison A.J."/>
            <person name="McGeoch D.J."/>
        </authorList>
    </citation>
    <scope>NUCLEOTIDE SEQUENCE [LARGE SCALE GENOMIC DNA]</scope>
</reference>
<accession>P0C6Z9</accession>
<accession>Q777D5</accession>
<protein>
    <recommendedName>
        <fullName evidence="2">Cytoplasmic envelopment protein 1</fullName>
    </recommendedName>
</protein>
<gene>
    <name type="ORF">BBRF2</name>
</gene>
<name>CEP1_EBVA8</name>
<feature type="chain" id="PRO_0000375975" description="Cytoplasmic envelopment protein 1">
    <location>
        <begin position="1"/>
        <end position="278"/>
    </location>
</feature>
<organismHost>
    <name type="scientific">Homo sapiens</name>
    <name type="common">Human</name>
    <dbReference type="NCBI Taxonomy" id="9606"/>
</organismHost>
<proteinExistence type="inferred from homology"/>
<dbReference type="EMBL" id="DQ279927">
    <property type="protein sequence ID" value="ABB89257.1"/>
    <property type="molecule type" value="Genomic_DNA"/>
</dbReference>
<dbReference type="RefSeq" id="YP_001129477.1">
    <property type="nucleotide sequence ID" value="NC_009334.1"/>
</dbReference>
<dbReference type="RefSeq" id="YP_401683.1">
    <property type="nucleotide sequence ID" value="NC_007605.1"/>
</dbReference>
<dbReference type="SMR" id="P0C6Z9"/>
<dbReference type="DNASU" id="3783686"/>
<dbReference type="GeneID" id="3783686"/>
<dbReference type="KEGG" id="vg:3783686"/>
<dbReference type="KEGG" id="vg:5176152"/>
<dbReference type="Proteomes" id="UP000007639">
    <property type="component" value="Genome"/>
</dbReference>
<dbReference type="GO" id="GO:0044177">
    <property type="term" value="C:host cell Golgi apparatus"/>
    <property type="evidence" value="ECO:0007669"/>
    <property type="project" value="UniProtKB-SubCell"/>
</dbReference>
<dbReference type="GO" id="GO:0019033">
    <property type="term" value="C:viral tegument"/>
    <property type="evidence" value="ECO:0007669"/>
    <property type="project" value="UniProtKB-SubCell"/>
</dbReference>
<dbReference type="HAMAP" id="MF_04038">
    <property type="entry name" value="HSV_CEP1"/>
    <property type="match status" value="1"/>
</dbReference>
<dbReference type="InterPro" id="IPR002600">
    <property type="entry name" value="Herpes_UL7"/>
</dbReference>
<dbReference type="Pfam" id="PF01677">
    <property type="entry name" value="Herpes_UL7"/>
    <property type="match status" value="1"/>
</dbReference>
<keyword id="KW-1035">Host cytoplasm</keyword>
<keyword id="KW-1040">Host Golgi apparatus</keyword>
<keyword id="KW-1185">Reference proteome</keyword>
<keyword id="KW-0946">Virion</keyword>
<keyword id="KW-0920">Virion tegument</keyword>
<comment type="function">
    <text evidence="2">Plays a critical role in cytoplasmic virus egress. Participates in the final step of tegumentation and envelope acquisition within the host cytoplasm.</text>
</comment>
<comment type="subunit">
    <text evidence="1">Interacts with BSRF1 tegument protein; the BBRF2-BSRF1 complexes oligomerize and might play a role in tethering the viral nucleocapsids to the host Golgi membrane during secondary envelopment.</text>
</comment>
<comment type="subcellular location">
    <subcellularLocation>
        <location evidence="2">Virion</location>
    </subcellularLocation>
    <subcellularLocation>
        <location evidence="2">Virion tegument</location>
    </subcellularLocation>
    <subcellularLocation>
        <location evidence="2">Host cytoplasm</location>
    </subcellularLocation>
    <subcellularLocation>
        <location evidence="2">Host Golgi apparatus</location>
    </subcellularLocation>
    <text evidence="1">Probably associates with the Golgi apparatus through its interaction with BSRF1.</text>
</comment>
<comment type="similarity">
    <text evidence="2">Belongs to the herpesviridae cytoplasmic envelopment protein 1 family.</text>
</comment>
<organism>
    <name type="scientific">Epstein-Barr virus (strain AG876)</name>
    <name type="common">HHV-4</name>
    <name type="synonym">Human herpesvirus 4</name>
    <dbReference type="NCBI Taxonomy" id="82830"/>
    <lineage>
        <taxon>Viruses</taxon>
        <taxon>Duplodnaviria</taxon>
        <taxon>Heunggongvirae</taxon>
        <taxon>Peploviricota</taxon>
        <taxon>Herviviricetes</taxon>
        <taxon>Herpesvirales</taxon>
        <taxon>Orthoherpesviridae</taxon>
        <taxon>Gammaherpesvirinae</taxon>
        <taxon>Lymphocryptovirus</taxon>
        <taxon>Lymphocryptovirus humangamma4</taxon>
        <taxon>Epstein-Barr virus (strain GD1)</taxon>
    </lineage>
</organism>